<protein>
    <recommendedName>
        <fullName evidence="2">DnaA regulatory inactivator Hda</fullName>
    </recommendedName>
</protein>
<feature type="chain" id="PRO_1000065568" description="DnaA regulatory inactivator Hda">
    <location>
        <begin position="1"/>
        <end position="233"/>
    </location>
</feature>
<organism>
    <name type="scientific">Shigella flexneri serotype 5b (strain 8401)</name>
    <dbReference type="NCBI Taxonomy" id="373384"/>
    <lineage>
        <taxon>Bacteria</taxon>
        <taxon>Pseudomonadati</taxon>
        <taxon>Pseudomonadota</taxon>
        <taxon>Gammaproteobacteria</taxon>
        <taxon>Enterobacterales</taxon>
        <taxon>Enterobacteriaceae</taxon>
        <taxon>Shigella</taxon>
    </lineage>
</organism>
<name>HDA_SHIF8</name>
<evidence type="ECO:0000250" key="1"/>
<evidence type="ECO:0000255" key="2">
    <source>
        <dbReference type="HAMAP-Rule" id="MF_01158"/>
    </source>
</evidence>
<evidence type="ECO:0000305" key="3"/>
<proteinExistence type="inferred from homology"/>
<accession>Q0T224</accession>
<dbReference type="EMBL" id="CP000266">
    <property type="protein sequence ID" value="ABF04641.1"/>
    <property type="status" value="ALT_INIT"/>
    <property type="molecule type" value="Genomic_DNA"/>
</dbReference>
<dbReference type="RefSeq" id="WP_001307333.1">
    <property type="nucleotide sequence ID" value="NC_008258.1"/>
</dbReference>
<dbReference type="SMR" id="Q0T224"/>
<dbReference type="KEGG" id="sfv:SFV_2541"/>
<dbReference type="HOGENOM" id="CLU_072265_1_1_6"/>
<dbReference type="Proteomes" id="UP000000659">
    <property type="component" value="Chromosome"/>
</dbReference>
<dbReference type="GO" id="GO:0006270">
    <property type="term" value="P:DNA replication initiation"/>
    <property type="evidence" value="ECO:0007669"/>
    <property type="project" value="TreeGrafter"/>
</dbReference>
<dbReference type="GO" id="GO:0032297">
    <property type="term" value="P:negative regulation of DNA-templated DNA replication initiation"/>
    <property type="evidence" value="ECO:0007669"/>
    <property type="project" value="InterPro"/>
</dbReference>
<dbReference type="FunFam" id="1.10.8.60:FF:000024">
    <property type="entry name" value="DnaA regulatory inactivator Hda"/>
    <property type="match status" value="1"/>
</dbReference>
<dbReference type="FunFam" id="3.40.50.300:FF:000452">
    <property type="entry name" value="DnaA regulatory inactivator Hda"/>
    <property type="match status" value="1"/>
</dbReference>
<dbReference type="Gene3D" id="1.10.8.60">
    <property type="match status" value="1"/>
</dbReference>
<dbReference type="Gene3D" id="3.40.50.300">
    <property type="entry name" value="P-loop containing nucleotide triphosphate hydrolases"/>
    <property type="match status" value="1"/>
</dbReference>
<dbReference type="HAMAP" id="MF_01158">
    <property type="entry name" value="Hda"/>
    <property type="match status" value="1"/>
</dbReference>
<dbReference type="InterPro" id="IPR020591">
    <property type="entry name" value="Chromosome_initiator_DnaA-like"/>
</dbReference>
<dbReference type="InterPro" id="IPR013317">
    <property type="entry name" value="DnaA_dom"/>
</dbReference>
<dbReference type="InterPro" id="IPR017788">
    <property type="entry name" value="Hda"/>
</dbReference>
<dbReference type="InterPro" id="IPR022864">
    <property type="entry name" value="Hda_Enterobact"/>
</dbReference>
<dbReference type="InterPro" id="IPR055199">
    <property type="entry name" value="Hda_lid"/>
</dbReference>
<dbReference type="InterPro" id="IPR027417">
    <property type="entry name" value="P-loop_NTPase"/>
</dbReference>
<dbReference type="NCBIfam" id="TIGR03420">
    <property type="entry name" value="DnaA_homol_Hda"/>
    <property type="match status" value="1"/>
</dbReference>
<dbReference type="NCBIfam" id="NF005982">
    <property type="entry name" value="PRK08084.1"/>
    <property type="match status" value="1"/>
</dbReference>
<dbReference type="PANTHER" id="PTHR30050">
    <property type="entry name" value="CHROMOSOMAL REPLICATION INITIATOR PROTEIN DNAA"/>
    <property type="match status" value="1"/>
</dbReference>
<dbReference type="PANTHER" id="PTHR30050:SF5">
    <property type="entry name" value="DNAA REGULATORY INACTIVATOR HDA"/>
    <property type="match status" value="1"/>
</dbReference>
<dbReference type="Pfam" id="PF00308">
    <property type="entry name" value="Bac_DnaA"/>
    <property type="match status" value="1"/>
</dbReference>
<dbReference type="Pfam" id="PF22688">
    <property type="entry name" value="Hda_lid"/>
    <property type="match status" value="1"/>
</dbReference>
<dbReference type="PRINTS" id="PR00051">
    <property type="entry name" value="DNAA"/>
</dbReference>
<dbReference type="SUPFAM" id="SSF52540">
    <property type="entry name" value="P-loop containing nucleoside triphosphate hydrolases"/>
    <property type="match status" value="1"/>
</dbReference>
<gene>
    <name evidence="2" type="primary">hda</name>
    <name type="ordered locus">SFV_2541</name>
</gene>
<comment type="function">
    <text evidence="1">Mediates the interaction of DNA replication initiator protein DnaA with DNA polymerase subunit beta sliding clamp (dnaN). Stimulates hydrolysis of ATP-DnaA to ADP-DnaA, rendering DnaA inactive for reinitiation, a process called regulatory inhibition of DnaA or RIDA (By similarity).</text>
</comment>
<comment type="subunit">
    <text evidence="2">The active form seems to be an ADP-bound monomer. Forms the RIDA complex (regulatory inactivation of DnaA) of ATP-DnaA, ADP-Hda and the DNA-loaded beta sliding clamp (dnaN).</text>
</comment>
<comment type="similarity">
    <text evidence="2">Belongs to the DnaA family. HdA subfamily.</text>
</comment>
<comment type="sequence caution" evidence="3">
    <conflict type="erroneous initiation">
        <sequence resource="EMBL-CDS" id="ABF04641"/>
    </conflict>
</comment>
<reference key="1">
    <citation type="journal article" date="2006" name="BMC Genomics">
        <title>Complete genome sequence of Shigella flexneri 5b and comparison with Shigella flexneri 2a.</title>
        <authorList>
            <person name="Nie H."/>
            <person name="Yang F."/>
            <person name="Zhang X."/>
            <person name="Yang J."/>
            <person name="Chen L."/>
            <person name="Wang J."/>
            <person name="Xiong Z."/>
            <person name="Peng J."/>
            <person name="Sun L."/>
            <person name="Dong J."/>
            <person name="Xue Y."/>
            <person name="Xu X."/>
            <person name="Chen S."/>
            <person name="Yao Z."/>
            <person name="Shen Y."/>
            <person name="Jin Q."/>
        </authorList>
    </citation>
    <scope>NUCLEOTIDE SEQUENCE [LARGE SCALE GENOMIC DNA]</scope>
    <source>
        <strain>8401</strain>
    </source>
</reference>
<keyword id="KW-0235">DNA replication</keyword>
<keyword id="KW-0236">DNA replication inhibitor</keyword>
<sequence length="233" mass="26633">MNTPAQLSLPLYLPDDETFASFWPGDNSSLLAALQNVLRQEHSGYIYLWAREGAGRSHLLHAACAELSQRGDAVGYVPLDKRTWFVPEVLDGMEHLSLVCIDNIECIAGDELWEMAIFDLYNRILESGKTRLLITGDRPPRQLNLGLPDLASRLDWGQIYKLQPLSDEDKLQALQLRARLRGFELPEDVGRFLLKRLDREMRTLFMTLDQLDRASITAQRKLTIPFVKEILKL</sequence>